<sequence length="155" mass="16215">MSAIPAGLAIRFKRWEGNADLPVPAYATVGAAGFDLRAHVPDDAPIVLKPGARCMAPTGFSVAIPDGYEMQVRPRSGLALKNGVTVVNAPGTVDSDYRGQVCVLLINLGEEDFTIRRGDRIAQGVIAAAPQWPLVEVEDLDATERGAGGFGSTGV</sequence>
<organism>
    <name type="scientific">Caulobacter vibrioides (strain NA1000 / CB15N)</name>
    <name type="common">Caulobacter crescentus</name>
    <dbReference type="NCBI Taxonomy" id="565050"/>
    <lineage>
        <taxon>Bacteria</taxon>
        <taxon>Pseudomonadati</taxon>
        <taxon>Pseudomonadota</taxon>
        <taxon>Alphaproteobacteria</taxon>
        <taxon>Caulobacterales</taxon>
        <taxon>Caulobacteraceae</taxon>
        <taxon>Caulobacter</taxon>
    </lineage>
</organism>
<feature type="chain" id="PRO_1000119230" description="Deoxyuridine 5'-triphosphate nucleotidohydrolase">
    <location>
        <begin position="1"/>
        <end position="155"/>
    </location>
</feature>
<feature type="binding site" evidence="1">
    <location>
        <begin position="75"/>
        <end position="77"/>
    </location>
    <ligand>
        <name>substrate</name>
    </ligand>
</feature>
<feature type="binding site" evidence="1">
    <location>
        <position position="88"/>
    </location>
    <ligand>
        <name>substrate</name>
    </ligand>
</feature>
<feature type="binding site" evidence="1">
    <location>
        <begin position="92"/>
        <end position="94"/>
    </location>
    <ligand>
        <name>substrate</name>
    </ligand>
</feature>
<keyword id="KW-0378">Hydrolase</keyword>
<keyword id="KW-0460">Magnesium</keyword>
<keyword id="KW-0479">Metal-binding</keyword>
<keyword id="KW-0546">Nucleotide metabolism</keyword>
<keyword id="KW-1185">Reference proteome</keyword>
<accession>B8GVZ0</accession>
<protein>
    <recommendedName>
        <fullName evidence="1">Deoxyuridine 5'-triphosphate nucleotidohydrolase</fullName>
        <shortName evidence="1">dUTPase</shortName>
        <ecNumber evidence="1">3.6.1.23</ecNumber>
    </recommendedName>
    <alternativeName>
        <fullName evidence="1">dUTP pyrophosphatase</fullName>
    </alternativeName>
</protein>
<dbReference type="EC" id="3.6.1.23" evidence="1"/>
<dbReference type="EMBL" id="CP001340">
    <property type="protein sequence ID" value="ACL97293.1"/>
    <property type="molecule type" value="Genomic_DNA"/>
</dbReference>
<dbReference type="RefSeq" id="WP_010921540.1">
    <property type="nucleotide sequence ID" value="NC_011916.1"/>
</dbReference>
<dbReference type="RefSeq" id="YP_002519201.1">
    <property type="nucleotide sequence ID" value="NC_011916.1"/>
</dbReference>
<dbReference type="SMR" id="B8GVZ0"/>
<dbReference type="GeneID" id="7332676"/>
<dbReference type="KEGG" id="ccs:CCNA_03828"/>
<dbReference type="PATRIC" id="fig|565050.3.peg.3733"/>
<dbReference type="HOGENOM" id="CLU_068508_1_2_5"/>
<dbReference type="OrthoDB" id="9809956at2"/>
<dbReference type="PhylomeDB" id="B8GVZ0"/>
<dbReference type="UniPathway" id="UPA00610">
    <property type="reaction ID" value="UER00666"/>
</dbReference>
<dbReference type="Proteomes" id="UP000001364">
    <property type="component" value="Chromosome"/>
</dbReference>
<dbReference type="GO" id="GO:0004170">
    <property type="term" value="F:dUTP diphosphatase activity"/>
    <property type="evidence" value="ECO:0007669"/>
    <property type="project" value="UniProtKB-UniRule"/>
</dbReference>
<dbReference type="GO" id="GO:0000287">
    <property type="term" value="F:magnesium ion binding"/>
    <property type="evidence" value="ECO:0007669"/>
    <property type="project" value="UniProtKB-UniRule"/>
</dbReference>
<dbReference type="GO" id="GO:0006226">
    <property type="term" value="P:dUMP biosynthetic process"/>
    <property type="evidence" value="ECO:0007669"/>
    <property type="project" value="UniProtKB-UniRule"/>
</dbReference>
<dbReference type="GO" id="GO:0046081">
    <property type="term" value="P:dUTP catabolic process"/>
    <property type="evidence" value="ECO:0007669"/>
    <property type="project" value="InterPro"/>
</dbReference>
<dbReference type="CDD" id="cd07557">
    <property type="entry name" value="trimeric_dUTPase"/>
    <property type="match status" value="1"/>
</dbReference>
<dbReference type="Gene3D" id="2.70.40.10">
    <property type="match status" value="1"/>
</dbReference>
<dbReference type="HAMAP" id="MF_00116">
    <property type="entry name" value="dUTPase_bact"/>
    <property type="match status" value="1"/>
</dbReference>
<dbReference type="InterPro" id="IPR008181">
    <property type="entry name" value="dUTPase"/>
</dbReference>
<dbReference type="InterPro" id="IPR029054">
    <property type="entry name" value="dUTPase-like"/>
</dbReference>
<dbReference type="InterPro" id="IPR036157">
    <property type="entry name" value="dUTPase-like_sf"/>
</dbReference>
<dbReference type="InterPro" id="IPR033704">
    <property type="entry name" value="dUTPase_trimeric"/>
</dbReference>
<dbReference type="NCBIfam" id="TIGR00576">
    <property type="entry name" value="dut"/>
    <property type="match status" value="1"/>
</dbReference>
<dbReference type="NCBIfam" id="NF001862">
    <property type="entry name" value="PRK00601.1"/>
    <property type="match status" value="1"/>
</dbReference>
<dbReference type="PANTHER" id="PTHR11241">
    <property type="entry name" value="DEOXYURIDINE 5'-TRIPHOSPHATE NUCLEOTIDOHYDROLASE"/>
    <property type="match status" value="1"/>
</dbReference>
<dbReference type="PANTHER" id="PTHR11241:SF0">
    <property type="entry name" value="DEOXYURIDINE 5'-TRIPHOSPHATE NUCLEOTIDOHYDROLASE"/>
    <property type="match status" value="1"/>
</dbReference>
<dbReference type="Pfam" id="PF00692">
    <property type="entry name" value="dUTPase"/>
    <property type="match status" value="1"/>
</dbReference>
<dbReference type="SUPFAM" id="SSF51283">
    <property type="entry name" value="dUTPase-like"/>
    <property type="match status" value="1"/>
</dbReference>
<proteinExistence type="inferred from homology"/>
<reference key="1">
    <citation type="journal article" date="2010" name="J. Bacteriol.">
        <title>The genetic basis of laboratory adaptation in Caulobacter crescentus.</title>
        <authorList>
            <person name="Marks M.E."/>
            <person name="Castro-Rojas C.M."/>
            <person name="Teiling C."/>
            <person name="Du L."/>
            <person name="Kapatral V."/>
            <person name="Walunas T.L."/>
            <person name="Crosson S."/>
        </authorList>
    </citation>
    <scope>NUCLEOTIDE SEQUENCE [LARGE SCALE GENOMIC DNA]</scope>
    <source>
        <strain>NA1000 / CB15N</strain>
    </source>
</reference>
<name>DUT_CAUVN</name>
<evidence type="ECO:0000255" key="1">
    <source>
        <dbReference type="HAMAP-Rule" id="MF_00116"/>
    </source>
</evidence>
<gene>
    <name evidence="1" type="primary">dut</name>
    <name type="ordered locus">CCNA_03828</name>
</gene>
<comment type="function">
    <text evidence="1">This enzyme is involved in nucleotide metabolism: it produces dUMP, the immediate precursor of thymidine nucleotides and it decreases the intracellular concentration of dUTP so that uracil cannot be incorporated into DNA.</text>
</comment>
<comment type="catalytic activity">
    <reaction evidence="1">
        <text>dUTP + H2O = dUMP + diphosphate + H(+)</text>
        <dbReference type="Rhea" id="RHEA:10248"/>
        <dbReference type="ChEBI" id="CHEBI:15377"/>
        <dbReference type="ChEBI" id="CHEBI:15378"/>
        <dbReference type="ChEBI" id="CHEBI:33019"/>
        <dbReference type="ChEBI" id="CHEBI:61555"/>
        <dbReference type="ChEBI" id="CHEBI:246422"/>
        <dbReference type="EC" id="3.6.1.23"/>
    </reaction>
</comment>
<comment type="cofactor">
    <cofactor evidence="1">
        <name>Mg(2+)</name>
        <dbReference type="ChEBI" id="CHEBI:18420"/>
    </cofactor>
</comment>
<comment type="pathway">
    <text evidence="1">Pyrimidine metabolism; dUMP biosynthesis; dUMP from dCTP (dUTP route): step 2/2.</text>
</comment>
<comment type="similarity">
    <text evidence="1">Belongs to the dUTPase family.</text>
</comment>